<name>IFNG_SAISC</name>
<organism>
    <name type="scientific">Saimiri sciureus</name>
    <name type="common">Common squirrel monkey</name>
    <dbReference type="NCBI Taxonomy" id="9521"/>
    <lineage>
        <taxon>Eukaryota</taxon>
        <taxon>Metazoa</taxon>
        <taxon>Chordata</taxon>
        <taxon>Craniata</taxon>
        <taxon>Vertebrata</taxon>
        <taxon>Euteleostomi</taxon>
        <taxon>Mammalia</taxon>
        <taxon>Eutheria</taxon>
        <taxon>Euarchontoglires</taxon>
        <taxon>Primates</taxon>
        <taxon>Haplorrhini</taxon>
        <taxon>Platyrrhini</taxon>
        <taxon>Cebidae</taxon>
        <taxon>Saimiriinae</taxon>
        <taxon>Saimiri</taxon>
    </lineage>
</organism>
<comment type="function">
    <text evidence="2 3">Type II interferon produced by immune cells such as T-cells and NK cells that plays crucial roles in antimicrobial, antiviral, and antitumor responses by activating effector immune cells and enhancing antigen presentation. Primarily signals through the JAK-STAT pathway after interaction with its receptor IFNGR1 to affect gene regulation. Upon IFNG binding, IFNGR1 intracellular domain opens out to allow association of downstream signaling components JAK2, JAK1 and STAT1, leading to STAT1 activation, nuclear translocation and transcription of IFNG-regulated genes. Many of the induced genes are transcription factors such as IRF1 that are able to further drive regulation of a next wave of transcription. Plays a role in class I antigen presentation pathway by inducing a replacement of catalytic proteasome subunits with immunoproteasome subunits. In turn, increases the quantity, quality, and repertoire of peptides for class I MHC loading. Increases the efficiency of peptide generation also by inducing the expression of activator PA28 that associates with the proteasome and alters its proteolytic cleavage preference. Up-regulates as well MHC II complexes on the cell surface by promoting expression of several key molecules such as cathepsins B/CTSB, H/CTSH, and L/CTSL (By similarity). Participates in the regulation of hematopoietic stem cells during development and under homeostatic conditions by affecting their development, quiescence, and differentiation (By similarity).</text>
</comment>
<comment type="subunit">
    <text evidence="2">Homodimer. Interacts with IFNGR1 (via extracellular domain); this interaction promotes IFNGR1 dimerization.</text>
</comment>
<comment type="subcellular location">
    <subcellularLocation>
        <location evidence="2">Secreted</location>
    </subcellularLocation>
</comment>
<comment type="tissue specificity">
    <text>Released primarily from activated T lymphocytes.</text>
</comment>
<comment type="similarity">
    <text evidence="5">Belongs to the type II (or gamma) interferon family.</text>
</comment>
<proteinExistence type="evidence at transcript level"/>
<protein>
    <recommendedName>
        <fullName>Interferon gamma</fullName>
        <shortName>IFN-gamma</shortName>
    </recommendedName>
</protein>
<evidence type="ECO:0000250" key="1"/>
<evidence type="ECO:0000250" key="2">
    <source>
        <dbReference type="UniProtKB" id="P01579"/>
    </source>
</evidence>
<evidence type="ECO:0000250" key="3">
    <source>
        <dbReference type="UniProtKB" id="P01580"/>
    </source>
</evidence>
<evidence type="ECO:0000255" key="4"/>
<evidence type="ECO:0000305" key="5"/>
<accession>Q8MKF5</accession>
<sequence>MKYTSYILAFQLCIVLGSLGCYCQDPYVKEAENLKKYFNAGDSDVADNGTLFLNILRTWREEGDRKIMQSQIISFYFKLFKNFKDNQSIQKSMETIKEDMNVKFFNSNKRKQDDFERLTNYSVTDLNVQRKAIHELIQVMAELSPAPKIGKRKRSQTLFRGRRASQ</sequence>
<feature type="signal peptide" evidence="1">
    <location>
        <begin position="1"/>
        <end position="23"/>
    </location>
</feature>
<feature type="chain" id="PRO_0000016458" description="Interferon gamma">
    <location>
        <begin position="24"/>
        <end position="166"/>
    </location>
</feature>
<feature type="modified residue" description="Pyrrolidone carboxylic acid" evidence="2">
    <location>
        <position position="24"/>
    </location>
</feature>
<feature type="glycosylation site" description="N-linked (GlcNAc...) asparagine" evidence="4">
    <location>
        <position position="48"/>
    </location>
</feature>
<feature type="glycosylation site" description="N-linked (GlcNAc...) asparagine" evidence="4">
    <location>
        <position position="86"/>
    </location>
</feature>
<feature type="glycosylation site" description="N-linked (GlcNAc...) asparagine" evidence="4">
    <location>
        <position position="120"/>
    </location>
</feature>
<keyword id="KW-0051">Antiviral defense</keyword>
<keyword id="KW-0202">Cytokine</keyword>
<keyword id="KW-0325">Glycoprotein</keyword>
<keyword id="KW-0341">Growth regulation</keyword>
<keyword id="KW-0873">Pyrrolidone carboxylic acid</keyword>
<keyword id="KW-0964">Secreted</keyword>
<keyword id="KW-0732">Signal</keyword>
<gene>
    <name type="primary">IFNG</name>
</gene>
<dbReference type="EMBL" id="AF414102">
    <property type="protein sequence ID" value="AAM21477.1"/>
    <property type="molecule type" value="mRNA"/>
</dbReference>
<dbReference type="SMR" id="Q8MKF5"/>
<dbReference type="GlyCosmos" id="Q8MKF5">
    <property type="glycosylation" value="3 sites, No reported glycans"/>
</dbReference>
<dbReference type="GO" id="GO:0005615">
    <property type="term" value="C:extracellular space"/>
    <property type="evidence" value="ECO:0007669"/>
    <property type="project" value="UniProtKB-KW"/>
</dbReference>
<dbReference type="GO" id="GO:0005125">
    <property type="term" value="F:cytokine activity"/>
    <property type="evidence" value="ECO:0007669"/>
    <property type="project" value="UniProtKB-KW"/>
</dbReference>
<dbReference type="GO" id="GO:0005133">
    <property type="term" value="F:type II interferon receptor binding"/>
    <property type="evidence" value="ECO:0007669"/>
    <property type="project" value="InterPro"/>
</dbReference>
<dbReference type="GO" id="GO:0002250">
    <property type="term" value="P:adaptive immune response"/>
    <property type="evidence" value="ECO:0007669"/>
    <property type="project" value="TreeGrafter"/>
</dbReference>
<dbReference type="GO" id="GO:0051607">
    <property type="term" value="P:defense response to virus"/>
    <property type="evidence" value="ECO:0007669"/>
    <property type="project" value="UniProtKB-KW"/>
</dbReference>
<dbReference type="GO" id="GO:0006959">
    <property type="term" value="P:humoral immune response"/>
    <property type="evidence" value="ECO:0007669"/>
    <property type="project" value="TreeGrafter"/>
</dbReference>
<dbReference type="FunFam" id="1.20.1250.10:FF:000007">
    <property type="entry name" value="Interferon gamma"/>
    <property type="match status" value="1"/>
</dbReference>
<dbReference type="Gene3D" id="1.20.1250.10">
    <property type="match status" value="1"/>
</dbReference>
<dbReference type="InterPro" id="IPR009079">
    <property type="entry name" value="4_helix_cytokine-like_core"/>
</dbReference>
<dbReference type="InterPro" id="IPR002069">
    <property type="entry name" value="Interferon_gamma"/>
</dbReference>
<dbReference type="PANTHER" id="PTHR11419">
    <property type="entry name" value="INTERFERON GAMMA"/>
    <property type="match status" value="1"/>
</dbReference>
<dbReference type="PANTHER" id="PTHR11419:SF0">
    <property type="entry name" value="INTERFERON GAMMA"/>
    <property type="match status" value="1"/>
</dbReference>
<dbReference type="Pfam" id="PF00714">
    <property type="entry name" value="IFN-gamma"/>
    <property type="match status" value="1"/>
</dbReference>
<dbReference type="PIRSF" id="PIRSF001936">
    <property type="entry name" value="IFN-gamma"/>
    <property type="match status" value="1"/>
</dbReference>
<dbReference type="SUPFAM" id="SSF47266">
    <property type="entry name" value="4-helical cytokines"/>
    <property type="match status" value="1"/>
</dbReference>
<reference key="1">
    <citation type="journal article" date="2002" name="Immunogenetics">
        <title>Molecular cloning, characterization, and quantification of squirrel monkey (Saimiri sciureus) Th1 and Th2 cytokines.</title>
        <authorList>
            <person name="Heraud J.M."/>
            <person name="Lavergne A."/>
            <person name="Kazanji M."/>
        </authorList>
    </citation>
    <scope>NUCLEOTIDE SEQUENCE [MRNA]</scope>
</reference>